<keyword id="KW-1003">Cell membrane</keyword>
<keyword id="KW-0297">G-protein coupled receptor</keyword>
<keyword id="KW-0325">Glycoprotein</keyword>
<keyword id="KW-0472">Membrane</keyword>
<keyword id="KW-0675">Receptor</keyword>
<keyword id="KW-1185">Reference proteome</keyword>
<keyword id="KW-0807">Transducer</keyword>
<keyword id="KW-0812">Transmembrane</keyword>
<keyword id="KW-1133">Transmembrane helix</keyword>
<accession>Q3ZBK9</accession>
<comment type="function">
    <text evidence="1">G-protein coupled receptor for Big LEN, a 16-amino acid neuropeptide produced from the precursor protein, proSAAS (encoded by PCSK1N). Acts through a G(i)-alpha-mediated pathway in response to bigLEN. Big LEN-GPR171 system plays an important role in regulating feeding and metabolism. Also plays a role in modulating fear and anxiety-like behaviors in the basolateral amygdala. Big LEN-GPR171 modulates the mu-type opioid receptor signaling and antinociception. Acts as a negative regulator T cell function.</text>
</comment>
<comment type="subcellular location">
    <subcellularLocation>
        <location evidence="1">Cell membrane</location>
        <topology evidence="2">Multi-pass membrane protein</topology>
    </subcellularLocation>
    <text evidence="1">Colocalized with GPR83 in the paraventricular nucleus.</text>
</comment>
<comment type="similarity">
    <text evidence="3">Belongs to the G-protein coupled receptor 1 family.</text>
</comment>
<reference key="1">
    <citation type="submission" date="2005-08" db="EMBL/GenBank/DDBJ databases">
        <authorList>
            <consortium name="NIH - Mammalian Gene Collection (MGC) project"/>
        </authorList>
    </citation>
    <scope>NUCLEOTIDE SEQUENCE [LARGE SCALE MRNA]</scope>
    <source>
        <strain>Hereford</strain>
        <tissue>Thymus</tissue>
    </source>
</reference>
<sequence>MTNSSTFCPVYRDLEPFTYFFYLVFLIGIIGSCFATWAFIQKNTNHRCVSIYLINLLTADFLLTLALPVKITVDLGVAPWKLRIFHCQVTACLIYINMYLSIIFLAFVSIDRCLQLTYSCKIYRIQEPGFAKMISAVVWLMVLLIMVPNMIIPIKDIKEKPNVGCMEFKSEFGRNWHLLTNFISIAIFFNFSAIILISNCLVIRQLYRNKDNENYPNVKRALISILLVTTGYIICFVPYHIVRIPYTLSQTEVISDCSTRISLFKAKEATLLLAVSNLCFDPILYYHLSKAFRLKITETFASHKESKAQKEKPRSENNA</sequence>
<proteinExistence type="evidence at transcript level"/>
<evidence type="ECO:0000250" key="1">
    <source>
        <dbReference type="UniProtKB" id="Q8BG55"/>
    </source>
</evidence>
<evidence type="ECO:0000255" key="2"/>
<evidence type="ECO:0000255" key="3">
    <source>
        <dbReference type="PROSITE-ProRule" id="PRU00521"/>
    </source>
</evidence>
<gene>
    <name type="primary">GPR171</name>
</gene>
<protein>
    <recommendedName>
        <fullName>G-protein coupled receptor 171</fullName>
    </recommendedName>
</protein>
<organism>
    <name type="scientific">Bos taurus</name>
    <name type="common">Bovine</name>
    <dbReference type="NCBI Taxonomy" id="9913"/>
    <lineage>
        <taxon>Eukaryota</taxon>
        <taxon>Metazoa</taxon>
        <taxon>Chordata</taxon>
        <taxon>Craniata</taxon>
        <taxon>Vertebrata</taxon>
        <taxon>Euteleostomi</taxon>
        <taxon>Mammalia</taxon>
        <taxon>Eutheria</taxon>
        <taxon>Laurasiatheria</taxon>
        <taxon>Artiodactyla</taxon>
        <taxon>Ruminantia</taxon>
        <taxon>Pecora</taxon>
        <taxon>Bovidae</taxon>
        <taxon>Bovinae</taxon>
        <taxon>Bos</taxon>
    </lineage>
</organism>
<dbReference type="EMBL" id="BC103237">
    <property type="protein sequence ID" value="AAI03238.1"/>
    <property type="molecule type" value="mRNA"/>
</dbReference>
<dbReference type="RefSeq" id="NP_001070470.1">
    <property type="nucleotide sequence ID" value="NM_001077002.2"/>
</dbReference>
<dbReference type="RefSeq" id="XP_005201884.1">
    <property type="nucleotide sequence ID" value="XM_005201827.3"/>
</dbReference>
<dbReference type="SMR" id="Q3ZBK9"/>
<dbReference type="FunCoup" id="Q3ZBK9">
    <property type="interactions" value="255"/>
</dbReference>
<dbReference type="STRING" id="9913.ENSBTAP00000012983"/>
<dbReference type="GlyCosmos" id="Q3ZBK9">
    <property type="glycosylation" value="1 site, No reported glycans"/>
</dbReference>
<dbReference type="GlyGen" id="Q3ZBK9">
    <property type="glycosylation" value="1 site"/>
</dbReference>
<dbReference type="PaxDb" id="9913-ENSBTAP00000012983"/>
<dbReference type="Ensembl" id="ENSBTAT00000124275.1">
    <property type="protein sequence ID" value="ENSBTAP00000094704.1"/>
    <property type="gene ID" value="ENSBTAG00000009848.7"/>
</dbReference>
<dbReference type="GeneID" id="767929"/>
<dbReference type="KEGG" id="bta:767929"/>
<dbReference type="CTD" id="29909"/>
<dbReference type="VEuPathDB" id="HostDB:ENSBTAG00000009848"/>
<dbReference type="VGNC" id="VGNC:29569">
    <property type="gene designation" value="GPR171"/>
</dbReference>
<dbReference type="eggNOG" id="ENOG502QTCA">
    <property type="taxonomic scope" value="Eukaryota"/>
</dbReference>
<dbReference type="GeneTree" id="ENSGT01110000267167"/>
<dbReference type="HOGENOM" id="CLU_009579_8_2_1"/>
<dbReference type="InParanoid" id="Q3ZBK9"/>
<dbReference type="OMA" id="EPFTYFY"/>
<dbReference type="OrthoDB" id="9935079at2759"/>
<dbReference type="TreeFam" id="TF330969"/>
<dbReference type="Proteomes" id="UP000009136">
    <property type="component" value="Chromosome 1"/>
</dbReference>
<dbReference type="Bgee" id="ENSBTAG00000009848">
    <property type="expression patterns" value="Expressed in thymus and 92 other cell types or tissues"/>
</dbReference>
<dbReference type="GO" id="GO:0005886">
    <property type="term" value="C:plasma membrane"/>
    <property type="evidence" value="ECO:0007669"/>
    <property type="project" value="UniProtKB-SubCell"/>
</dbReference>
<dbReference type="GO" id="GO:0008528">
    <property type="term" value="F:G protein-coupled peptide receptor activity"/>
    <property type="evidence" value="ECO:0000250"/>
    <property type="project" value="UniProtKB"/>
</dbReference>
<dbReference type="GO" id="GO:0045028">
    <property type="term" value="F:G protein-coupled purinergic nucleotide receptor activity"/>
    <property type="evidence" value="ECO:0000318"/>
    <property type="project" value="GO_Central"/>
</dbReference>
<dbReference type="GO" id="GO:0042923">
    <property type="term" value="F:neuropeptide binding"/>
    <property type="evidence" value="ECO:0000250"/>
    <property type="project" value="UniProtKB"/>
</dbReference>
<dbReference type="GO" id="GO:0008188">
    <property type="term" value="F:neuropeptide receptor activity"/>
    <property type="evidence" value="ECO:0000250"/>
    <property type="project" value="UniProtKB"/>
</dbReference>
<dbReference type="GO" id="GO:0007188">
    <property type="term" value="P:adenylate cyclase-modulating G protein-coupled receptor signaling pathway"/>
    <property type="evidence" value="ECO:0000250"/>
    <property type="project" value="UniProtKB"/>
</dbReference>
<dbReference type="GO" id="GO:0007186">
    <property type="term" value="P:G protein-coupled receptor signaling pathway"/>
    <property type="evidence" value="ECO:0000250"/>
    <property type="project" value="UniProtKB"/>
</dbReference>
<dbReference type="GO" id="GO:0060259">
    <property type="term" value="P:regulation of feeding behavior"/>
    <property type="evidence" value="ECO:0000250"/>
    <property type="project" value="UniProtKB"/>
</dbReference>
<dbReference type="GO" id="GO:0051930">
    <property type="term" value="P:regulation of sensory perception of pain"/>
    <property type="evidence" value="ECO:0000250"/>
    <property type="project" value="UniProtKB"/>
</dbReference>
<dbReference type="CDD" id="cd15167">
    <property type="entry name" value="7tmA_GPR171"/>
    <property type="match status" value="1"/>
</dbReference>
<dbReference type="FunFam" id="1.20.1070.10:FF:000206">
    <property type="entry name" value="Probable G-protein coupled receptor 171"/>
    <property type="match status" value="1"/>
</dbReference>
<dbReference type="Gene3D" id="1.20.1070.10">
    <property type="entry name" value="Rhodopsin 7-helix transmembrane proteins"/>
    <property type="match status" value="1"/>
</dbReference>
<dbReference type="InterPro" id="IPR000276">
    <property type="entry name" value="GPCR_Rhodpsn"/>
</dbReference>
<dbReference type="InterPro" id="IPR017452">
    <property type="entry name" value="GPCR_Rhodpsn_7TM"/>
</dbReference>
<dbReference type="InterPro" id="IPR048077">
    <property type="entry name" value="GPR171"/>
</dbReference>
<dbReference type="PANTHER" id="PTHR24233:SF4">
    <property type="entry name" value="G-PROTEIN COUPLED RECEPTOR 171"/>
    <property type="match status" value="1"/>
</dbReference>
<dbReference type="PANTHER" id="PTHR24233">
    <property type="entry name" value="P2Y PURINOCEPTOR-RELATED G-PROTEIN COUPLED RECEPTOR"/>
    <property type="match status" value="1"/>
</dbReference>
<dbReference type="Pfam" id="PF00001">
    <property type="entry name" value="7tm_1"/>
    <property type="match status" value="1"/>
</dbReference>
<dbReference type="PRINTS" id="PR00237">
    <property type="entry name" value="GPCRRHODOPSN"/>
</dbReference>
<dbReference type="PRINTS" id="PR01157">
    <property type="entry name" value="P2YPURNOCPTR"/>
</dbReference>
<dbReference type="SUPFAM" id="SSF81321">
    <property type="entry name" value="Family A G protein-coupled receptor-like"/>
    <property type="match status" value="1"/>
</dbReference>
<dbReference type="PROSITE" id="PS00237">
    <property type="entry name" value="G_PROTEIN_RECEP_F1_1"/>
    <property type="match status" value="1"/>
</dbReference>
<dbReference type="PROSITE" id="PS50262">
    <property type="entry name" value="G_PROTEIN_RECEP_F1_2"/>
    <property type="match status" value="1"/>
</dbReference>
<feature type="chain" id="PRO_0000245014" description="G-protein coupled receptor 171">
    <location>
        <begin position="1"/>
        <end position="319"/>
    </location>
</feature>
<feature type="topological domain" description="Extracellular" evidence="2">
    <location>
        <begin position="1"/>
        <end position="21"/>
    </location>
</feature>
<feature type="transmembrane region" description="Helical; Name=1" evidence="2">
    <location>
        <begin position="22"/>
        <end position="42"/>
    </location>
</feature>
<feature type="topological domain" description="Cytoplasmic" evidence="2">
    <location>
        <begin position="43"/>
        <end position="48"/>
    </location>
</feature>
<feature type="transmembrane region" description="Helical; Name=2" evidence="2">
    <location>
        <begin position="49"/>
        <end position="69"/>
    </location>
</feature>
<feature type="topological domain" description="Extracellular" evidence="2">
    <location>
        <begin position="70"/>
        <end position="89"/>
    </location>
</feature>
<feature type="transmembrane region" description="Helical; Name=3" evidence="2">
    <location>
        <begin position="90"/>
        <end position="110"/>
    </location>
</feature>
<feature type="topological domain" description="Cytoplasmic" evidence="2">
    <location>
        <begin position="111"/>
        <end position="132"/>
    </location>
</feature>
<feature type="transmembrane region" description="Helical; Name=4" evidence="2">
    <location>
        <begin position="133"/>
        <end position="153"/>
    </location>
</feature>
<feature type="topological domain" description="Extracellular" evidence="2">
    <location>
        <begin position="154"/>
        <end position="181"/>
    </location>
</feature>
<feature type="transmembrane region" description="Helical; Name=5" evidence="2">
    <location>
        <begin position="182"/>
        <end position="202"/>
    </location>
</feature>
<feature type="topological domain" description="Cytoplasmic" evidence="2">
    <location>
        <begin position="203"/>
        <end position="224"/>
    </location>
</feature>
<feature type="transmembrane region" description="Helical; Name=6" evidence="2">
    <location>
        <begin position="225"/>
        <end position="245"/>
    </location>
</feature>
<feature type="topological domain" description="Extracellular" evidence="2">
    <location>
        <begin position="246"/>
        <end position="268"/>
    </location>
</feature>
<feature type="transmembrane region" description="Helical; Name=7" evidence="2">
    <location>
        <begin position="269"/>
        <end position="289"/>
    </location>
</feature>
<feature type="topological domain" description="Cytoplasmic" evidence="2">
    <location>
        <begin position="290"/>
        <end position="319"/>
    </location>
</feature>
<feature type="glycosylation site" description="N-linked (GlcNAc...) asparagine" evidence="2">
    <location>
        <position position="3"/>
    </location>
</feature>
<name>GP171_BOVIN</name>